<name>RS2_THEVO</name>
<proteinExistence type="inferred from homology"/>
<comment type="similarity">
    <text evidence="1">Belongs to the universal ribosomal protein uS2 family.</text>
</comment>
<comment type="sequence caution" evidence="1">
    <conflict type="erroneous initiation">
        <sequence resource="EMBL-CDS" id="BAB59543"/>
    </conflict>
</comment>
<accession>Q97BQ4</accession>
<reference key="1">
    <citation type="journal article" date="2000" name="Proc. Natl. Acad. Sci. U.S.A.">
        <title>Archaeal adaptation to higher temperatures revealed by genomic sequence of Thermoplasma volcanium.</title>
        <authorList>
            <person name="Kawashima T."/>
            <person name="Amano N."/>
            <person name="Koike H."/>
            <person name="Makino S."/>
            <person name="Higuchi S."/>
            <person name="Kawashima-Ohya Y."/>
            <person name="Watanabe K."/>
            <person name="Yamazaki M."/>
            <person name="Kanehori K."/>
            <person name="Kawamoto T."/>
            <person name="Nunoshiba T."/>
            <person name="Yamamoto Y."/>
            <person name="Aramaki H."/>
            <person name="Makino K."/>
            <person name="Suzuki M."/>
        </authorList>
    </citation>
    <scope>NUCLEOTIDE SEQUENCE [LARGE SCALE GENOMIC DNA]</scope>
    <source>
        <strain>ATCC 51530 / DSM 4299 / JCM 9571 / NBRC 15438 / GSS1</strain>
    </source>
</reference>
<evidence type="ECO:0000305" key="1"/>
<protein>
    <recommendedName>
        <fullName evidence="1">Small ribosomal subunit protein uS2</fullName>
    </recommendedName>
    <alternativeName>
        <fullName>30S ribosomal protein S2</fullName>
    </alternativeName>
</protein>
<gene>
    <name type="primary">rps2</name>
    <name type="ordered locus">TV0401</name>
    <name type="ORF">TVG0390580</name>
</gene>
<sequence>MEEEMLIPEEEYQKSGVHIGTQVKSSDMKPYIFKIRNDGLYILDVKKTNSKLIAAGKMLARFDPQDILVVAQRQYAFRPVAKFAEVTGAVSITGRFNPGTLTNPSLKFYKEVKVIVVTDPLADVQAMKEAIKIGIPIIALCDANNKTDFVDLVIPTNNKGRRSLAVIYWLLAREILKNRGTITSYDQFKYTIDDFEAQI</sequence>
<organism>
    <name type="scientific">Thermoplasma volcanium (strain ATCC 51530 / DSM 4299 / JCM 9571 / NBRC 15438 / GSS1)</name>
    <dbReference type="NCBI Taxonomy" id="273116"/>
    <lineage>
        <taxon>Archaea</taxon>
        <taxon>Methanobacteriati</taxon>
        <taxon>Thermoplasmatota</taxon>
        <taxon>Thermoplasmata</taxon>
        <taxon>Thermoplasmatales</taxon>
        <taxon>Thermoplasmataceae</taxon>
        <taxon>Thermoplasma</taxon>
    </lineage>
</organism>
<dbReference type="EMBL" id="BA000011">
    <property type="protein sequence ID" value="BAB59543.1"/>
    <property type="status" value="ALT_INIT"/>
    <property type="molecule type" value="Genomic_DNA"/>
</dbReference>
<dbReference type="RefSeq" id="WP_010916657.1">
    <property type="nucleotide sequence ID" value="NC_002689.2"/>
</dbReference>
<dbReference type="SMR" id="Q97BQ4"/>
<dbReference type="STRING" id="273116.gene:9381179"/>
<dbReference type="PaxDb" id="273116-14324616"/>
<dbReference type="GeneID" id="1440915"/>
<dbReference type="KEGG" id="tvo:TVG0390580"/>
<dbReference type="eggNOG" id="arCOG04245">
    <property type="taxonomic scope" value="Archaea"/>
</dbReference>
<dbReference type="HOGENOM" id="CLU_058171_3_0_2"/>
<dbReference type="OrthoDB" id="371797at2157"/>
<dbReference type="PhylomeDB" id="Q97BQ4"/>
<dbReference type="Proteomes" id="UP000001017">
    <property type="component" value="Chromosome"/>
</dbReference>
<dbReference type="GO" id="GO:0015935">
    <property type="term" value="C:small ribosomal subunit"/>
    <property type="evidence" value="ECO:0007669"/>
    <property type="project" value="InterPro"/>
</dbReference>
<dbReference type="GO" id="GO:0003735">
    <property type="term" value="F:structural constituent of ribosome"/>
    <property type="evidence" value="ECO:0007669"/>
    <property type="project" value="InterPro"/>
</dbReference>
<dbReference type="GO" id="GO:0006412">
    <property type="term" value="P:translation"/>
    <property type="evidence" value="ECO:0007669"/>
    <property type="project" value="UniProtKB-UniRule"/>
</dbReference>
<dbReference type="CDD" id="cd01425">
    <property type="entry name" value="RPS2"/>
    <property type="match status" value="1"/>
</dbReference>
<dbReference type="FunFam" id="3.40.50.10490:FF:000030">
    <property type="entry name" value="30S ribosomal protein S2"/>
    <property type="match status" value="1"/>
</dbReference>
<dbReference type="Gene3D" id="3.40.50.10490">
    <property type="entry name" value="Glucose-6-phosphate isomerase like protein, domain 1"/>
    <property type="match status" value="1"/>
</dbReference>
<dbReference type="HAMAP" id="MF_00291_A">
    <property type="entry name" value="Ribosomal_uS2_A"/>
    <property type="match status" value="1"/>
</dbReference>
<dbReference type="InterPro" id="IPR001865">
    <property type="entry name" value="Ribosomal_uS2"/>
</dbReference>
<dbReference type="InterPro" id="IPR023454">
    <property type="entry name" value="Ribosomal_uS2_arc"/>
</dbReference>
<dbReference type="InterPro" id="IPR005707">
    <property type="entry name" value="Ribosomal_uS2_euk/arc"/>
</dbReference>
<dbReference type="InterPro" id="IPR023591">
    <property type="entry name" value="Ribosomal_uS2_flav_dom_sf"/>
</dbReference>
<dbReference type="NCBIfam" id="TIGR01012">
    <property type="entry name" value="uS2_euk_arch"/>
    <property type="match status" value="1"/>
</dbReference>
<dbReference type="PANTHER" id="PTHR11489">
    <property type="entry name" value="40S RIBOSOMAL PROTEIN SA"/>
    <property type="match status" value="1"/>
</dbReference>
<dbReference type="Pfam" id="PF00318">
    <property type="entry name" value="Ribosomal_S2"/>
    <property type="match status" value="2"/>
</dbReference>
<dbReference type="PRINTS" id="PR00395">
    <property type="entry name" value="RIBOSOMALS2"/>
</dbReference>
<dbReference type="SUPFAM" id="SSF52313">
    <property type="entry name" value="Ribosomal protein S2"/>
    <property type="match status" value="1"/>
</dbReference>
<keyword id="KW-0687">Ribonucleoprotein</keyword>
<keyword id="KW-0689">Ribosomal protein</keyword>
<feature type="chain" id="PRO_0000134337" description="Small ribosomal subunit protein uS2">
    <location>
        <begin position="1"/>
        <end position="199"/>
    </location>
</feature>